<keyword id="KW-0240">DNA-directed RNA polymerase</keyword>
<keyword id="KW-0548">Nucleotidyltransferase</keyword>
<keyword id="KW-0804">Transcription</keyword>
<keyword id="KW-0808">Transferase</keyword>
<reference key="1">
    <citation type="journal article" date="2004" name="Nat. Biotechnol.">
        <title>Complete genome sequence of the metabolically versatile photosynthetic bacterium Rhodopseudomonas palustris.</title>
        <authorList>
            <person name="Larimer F.W."/>
            <person name="Chain P."/>
            <person name="Hauser L."/>
            <person name="Lamerdin J.E."/>
            <person name="Malfatti S."/>
            <person name="Do L."/>
            <person name="Land M.L."/>
            <person name="Pelletier D.A."/>
            <person name="Beatty J.T."/>
            <person name="Lang A.S."/>
            <person name="Tabita F.R."/>
            <person name="Gibson J.L."/>
            <person name="Hanson T.E."/>
            <person name="Bobst C."/>
            <person name="Torres y Torres J.L."/>
            <person name="Peres C."/>
            <person name="Harrison F.H."/>
            <person name="Gibson J."/>
            <person name="Harwood C.S."/>
        </authorList>
    </citation>
    <scope>NUCLEOTIDE SEQUENCE [LARGE SCALE GENOMIC DNA]</scope>
    <source>
        <strain>ATCC BAA-98 / CGA009</strain>
    </source>
</reference>
<dbReference type="EC" id="2.7.7.6" evidence="1"/>
<dbReference type="EMBL" id="BX572603">
    <property type="protein sequence ID" value="CAE28667.1"/>
    <property type="molecule type" value="Genomic_DNA"/>
</dbReference>
<dbReference type="RefSeq" id="WP_011158771.1">
    <property type="nucleotide sequence ID" value="NZ_CP116810.1"/>
</dbReference>
<dbReference type="SMR" id="Q6N4V7"/>
<dbReference type="STRING" id="258594.RPA3226"/>
<dbReference type="GeneID" id="66894312"/>
<dbReference type="eggNOG" id="COG0202">
    <property type="taxonomic scope" value="Bacteria"/>
</dbReference>
<dbReference type="HOGENOM" id="CLU_053084_0_0_5"/>
<dbReference type="PhylomeDB" id="Q6N4V7"/>
<dbReference type="GO" id="GO:0005737">
    <property type="term" value="C:cytoplasm"/>
    <property type="evidence" value="ECO:0007669"/>
    <property type="project" value="UniProtKB-ARBA"/>
</dbReference>
<dbReference type="GO" id="GO:0000428">
    <property type="term" value="C:DNA-directed RNA polymerase complex"/>
    <property type="evidence" value="ECO:0007669"/>
    <property type="project" value="UniProtKB-KW"/>
</dbReference>
<dbReference type="GO" id="GO:0003677">
    <property type="term" value="F:DNA binding"/>
    <property type="evidence" value="ECO:0007669"/>
    <property type="project" value="UniProtKB-UniRule"/>
</dbReference>
<dbReference type="GO" id="GO:0003899">
    <property type="term" value="F:DNA-directed RNA polymerase activity"/>
    <property type="evidence" value="ECO:0007669"/>
    <property type="project" value="UniProtKB-UniRule"/>
</dbReference>
<dbReference type="GO" id="GO:0046983">
    <property type="term" value="F:protein dimerization activity"/>
    <property type="evidence" value="ECO:0007669"/>
    <property type="project" value="InterPro"/>
</dbReference>
<dbReference type="GO" id="GO:0006351">
    <property type="term" value="P:DNA-templated transcription"/>
    <property type="evidence" value="ECO:0007669"/>
    <property type="project" value="UniProtKB-UniRule"/>
</dbReference>
<dbReference type="CDD" id="cd06928">
    <property type="entry name" value="RNAP_alpha_NTD"/>
    <property type="match status" value="1"/>
</dbReference>
<dbReference type="FunFam" id="1.10.150.20:FF:000001">
    <property type="entry name" value="DNA-directed RNA polymerase subunit alpha"/>
    <property type="match status" value="1"/>
</dbReference>
<dbReference type="FunFam" id="2.170.120.12:FF:000001">
    <property type="entry name" value="DNA-directed RNA polymerase subunit alpha"/>
    <property type="match status" value="1"/>
</dbReference>
<dbReference type="Gene3D" id="1.10.150.20">
    <property type="entry name" value="5' to 3' exonuclease, C-terminal subdomain"/>
    <property type="match status" value="1"/>
</dbReference>
<dbReference type="Gene3D" id="2.170.120.12">
    <property type="entry name" value="DNA-directed RNA polymerase, insert domain"/>
    <property type="match status" value="1"/>
</dbReference>
<dbReference type="Gene3D" id="3.30.1360.10">
    <property type="entry name" value="RNA polymerase, RBP11-like subunit"/>
    <property type="match status" value="1"/>
</dbReference>
<dbReference type="HAMAP" id="MF_00059">
    <property type="entry name" value="RNApol_bact_RpoA"/>
    <property type="match status" value="1"/>
</dbReference>
<dbReference type="InterPro" id="IPR011262">
    <property type="entry name" value="DNA-dir_RNA_pol_insert"/>
</dbReference>
<dbReference type="InterPro" id="IPR011263">
    <property type="entry name" value="DNA-dir_RNA_pol_RpoA/D/Rpb3"/>
</dbReference>
<dbReference type="InterPro" id="IPR011773">
    <property type="entry name" value="DNA-dir_RpoA"/>
</dbReference>
<dbReference type="InterPro" id="IPR036603">
    <property type="entry name" value="RBP11-like"/>
</dbReference>
<dbReference type="InterPro" id="IPR011260">
    <property type="entry name" value="RNAP_asu_C"/>
</dbReference>
<dbReference type="InterPro" id="IPR036643">
    <property type="entry name" value="RNApol_insert_sf"/>
</dbReference>
<dbReference type="NCBIfam" id="NF003513">
    <property type="entry name" value="PRK05182.1-2"/>
    <property type="match status" value="1"/>
</dbReference>
<dbReference type="NCBIfam" id="NF003519">
    <property type="entry name" value="PRK05182.2-5"/>
    <property type="match status" value="1"/>
</dbReference>
<dbReference type="NCBIfam" id="TIGR02027">
    <property type="entry name" value="rpoA"/>
    <property type="match status" value="1"/>
</dbReference>
<dbReference type="Pfam" id="PF01000">
    <property type="entry name" value="RNA_pol_A_bac"/>
    <property type="match status" value="1"/>
</dbReference>
<dbReference type="Pfam" id="PF03118">
    <property type="entry name" value="RNA_pol_A_CTD"/>
    <property type="match status" value="1"/>
</dbReference>
<dbReference type="Pfam" id="PF01193">
    <property type="entry name" value="RNA_pol_L"/>
    <property type="match status" value="1"/>
</dbReference>
<dbReference type="SMART" id="SM00662">
    <property type="entry name" value="RPOLD"/>
    <property type="match status" value="1"/>
</dbReference>
<dbReference type="SUPFAM" id="SSF47789">
    <property type="entry name" value="C-terminal domain of RNA polymerase alpha subunit"/>
    <property type="match status" value="1"/>
</dbReference>
<dbReference type="SUPFAM" id="SSF56553">
    <property type="entry name" value="Insert subdomain of RNA polymerase alpha subunit"/>
    <property type="match status" value="1"/>
</dbReference>
<dbReference type="SUPFAM" id="SSF55257">
    <property type="entry name" value="RBP11-like subunits of RNA polymerase"/>
    <property type="match status" value="1"/>
</dbReference>
<comment type="function">
    <text evidence="1">DNA-dependent RNA polymerase catalyzes the transcription of DNA into RNA using the four ribonucleoside triphosphates as substrates.</text>
</comment>
<comment type="catalytic activity">
    <reaction evidence="1">
        <text>RNA(n) + a ribonucleoside 5'-triphosphate = RNA(n+1) + diphosphate</text>
        <dbReference type="Rhea" id="RHEA:21248"/>
        <dbReference type="Rhea" id="RHEA-COMP:14527"/>
        <dbReference type="Rhea" id="RHEA-COMP:17342"/>
        <dbReference type="ChEBI" id="CHEBI:33019"/>
        <dbReference type="ChEBI" id="CHEBI:61557"/>
        <dbReference type="ChEBI" id="CHEBI:140395"/>
        <dbReference type="EC" id="2.7.7.6"/>
    </reaction>
</comment>
<comment type="subunit">
    <text evidence="1">Homodimer. The RNAP catalytic core consists of 2 alpha, 1 beta, 1 beta' and 1 omega subunit. When a sigma factor is associated with the core the holoenzyme is formed, which can initiate transcription.</text>
</comment>
<comment type="domain">
    <text evidence="1">The N-terminal domain is essential for RNAP assembly and basal transcription, whereas the C-terminal domain is involved in interaction with transcriptional regulators and with upstream promoter elements.</text>
</comment>
<comment type="similarity">
    <text evidence="1">Belongs to the RNA polymerase alpha chain family.</text>
</comment>
<accession>Q6N4V7</accession>
<name>RPOA_RHOPA</name>
<organism>
    <name type="scientific">Rhodopseudomonas palustris (strain ATCC BAA-98 / CGA009)</name>
    <dbReference type="NCBI Taxonomy" id="258594"/>
    <lineage>
        <taxon>Bacteria</taxon>
        <taxon>Pseudomonadati</taxon>
        <taxon>Pseudomonadota</taxon>
        <taxon>Alphaproteobacteria</taxon>
        <taxon>Hyphomicrobiales</taxon>
        <taxon>Nitrobacteraceae</taxon>
        <taxon>Rhodopseudomonas</taxon>
    </lineage>
</organism>
<protein>
    <recommendedName>
        <fullName evidence="1">DNA-directed RNA polymerase subunit alpha</fullName>
        <shortName evidence="1">RNAP subunit alpha</shortName>
        <ecNumber evidence="1">2.7.7.6</ecNumber>
    </recommendedName>
    <alternativeName>
        <fullName evidence="1">RNA polymerase subunit alpha</fullName>
    </alternativeName>
    <alternativeName>
        <fullName evidence="1">Transcriptase subunit alpha</fullName>
    </alternativeName>
</protein>
<feature type="chain" id="PRO_0000175367" description="DNA-directed RNA polymerase subunit alpha">
    <location>
        <begin position="1"/>
        <end position="339"/>
    </location>
</feature>
<feature type="region of interest" description="Alpha N-terminal domain (alpha-NTD)" evidence="1">
    <location>
        <begin position="1"/>
        <end position="235"/>
    </location>
</feature>
<feature type="region of interest" description="Alpha C-terminal domain (alpha-CTD)" evidence="1">
    <location>
        <begin position="251"/>
        <end position="339"/>
    </location>
</feature>
<sequence length="339" mass="37535">MTIQKNWQELIRPNKLQVTPGSDATRFATLVAEPLERGFGQTLGNALRRVLLSSLQGAAVQSVHIDGVLHEFSSIAGVREDVTDIVLNIKDISLKMQGEGPKRMVVKKQGPGAVTAGDIQTVGDIVVLNPDLQLCTLDDGAEIRMEFTVNTGKGYVAAERNRPEDAPIGLIPVDSLYSPVRKVSYKVENTREGQILDYDKLTMTVETNGAISPEDAVAFAARILQDQLNVFVNFEEPRKEVTQEIIPDLAFNPAFLKKVDELELSVRSANCLKNDNIVYIGDLVQKSEAEMLRTPNFGRKSLNEIKEVLAQMGLHLGMEVPGWPPENIDELAKRFEDHY</sequence>
<evidence type="ECO:0000255" key="1">
    <source>
        <dbReference type="HAMAP-Rule" id="MF_00059"/>
    </source>
</evidence>
<proteinExistence type="inferred from homology"/>
<gene>
    <name evidence="1" type="primary">rpoA</name>
    <name type="ordered locus">RPA3226</name>
</gene>